<evidence type="ECO:0000255" key="1"/>
<evidence type="ECO:0000269" key="2">
    <source>
    </source>
</evidence>
<evidence type="ECO:0000305" key="3"/>
<evidence type="ECO:0000305" key="4">
    <source>
    </source>
</evidence>
<evidence type="ECO:0000305" key="5">
    <source>
    </source>
</evidence>
<proteinExistence type="uncertain"/>
<sequence>MKTLDKITNYDLFDFADEFLKFVPVFRPNPTVTCLFGNPLTNLLVNGTGAACFFEFCSLALIKVSKILLDLLLLALLIDSENELCFEIDGDWLCVLGFGEGDLEVGRSLGMALPDDDVLLSITFWFLCNSSFSILFVFELRIFLRTVNNLLVVFLSVLKRNDL</sequence>
<organism>
    <name type="scientific">Saccharomyces cerevisiae (strain ATCC 204508 / S288c)</name>
    <name type="common">Baker's yeast</name>
    <dbReference type="NCBI Taxonomy" id="559292"/>
    <lineage>
        <taxon>Eukaryota</taxon>
        <taxon>Fungi</taxon>
        <taxon>Dikarya</taxon>
        <taxon>Ascomycota</taxon>
        <taxon>Saccharomycotina</taxon>
        <taxon>Saccharomycetes</taxon>
        <taxon>Saccharomycetales</taxon>
        <taxon>Saccharomycetaceae</taxon>
        <taxon>Saccharomyces</taxon>
    </lineage>
</organism>
<protein>
    <recommendedName>
        <fullName>Putative uncharacterized membrane protein YOL099C</fullName>
    </recommendedName>
</protein>
<feature type="chain" id="PRO_0000262743" description="Putative uncharacterized membrane protein YOL099C">
    <location>
        <begin position="1"/>
        <end position="163"/>
    </location>
</feature>
<feature type="topological domain" description="Cytoplasmic" evidence="4">
    <location>
        <begin position="1"/>
        <end position="33"/>
    </location>
</feature>
<feature type="transmembrane region" description="Helical" evidence="1">
    <location>
        <begin position="34"/>
        <end position="54"/>
    </location>
</feature>
<feature type="topological domain" description="Extracellular" evidence="4">
    <location>
        <begin position="55"/>
        <end position="117"/>
    </location>
</feature>
<feature type="transmembrane region" description="Helical" evidence="1">
    <location>
        <begin position="118"/>
        <end position="138"/>
    </location>
</feature>
<feature type="topological domain" description="Cytoplasmic" evidence="2">
    <location>
        <begin position="139"/>
        <end position="163"/>
    </location>
</feature>
<comment type="subcellular location">
    <subcellularLocation>
        <location>Membrane</location>
        <topology>Multi-pass membrane protein</topology>
    </subcellularLocation>
</comment>
<comment type="miscellaneous">
    <text evidence="3">Partially overlaps YOL100W.</text>
</comment>
<comment type="caution">
    <text evidence="5">Product of a dubious gene prediction unlikely to encode a functional protein. Because of that it is not part of the S.cerevisiae S288c complete/reference proteome set.</text>
</comment>
<gene>
    <name type="ordered locus">YOL099C</name>
    <name type="ORF">O0786</name>
</gene>
<name>YO099_YEAST</name>
<dbReference type="EMBL" id="Z74842">
    <property type="protein sequence ID" value="CAA99114.1"/>
    <property type="molecule type" value="Genomic_DNA"/>
</dbReference>
<dbReference type="PIR" id="S66795">
    <property type="entry name" value="S66795"/>
</dbReference>
<dbReference type="DIP" id="DIP-4223N"/>
<dbReference type="PaxDb" id="4932-YOL099C"/>
<dbReference type="EnsemblFungi" id="YOL099C_mRNA">
    <property type="protein sequence ID" value="YOL099C"/>
    <property type="gene ID" value="YOL099C"/>
</dbReference>
<dbReference type="AGR" id="SGD:S000005459"/>
<dbReference type="SGD" id="S000005459">
    <property type="gene designation" value="YOL099C"/>
</dbReference>
<dbReference type="HOGENOM" id="CLU_1628346_0_0_1"/>
<dbReference type="GO" id="GO:0016020">
    <property type="term" value="C:membrane"/>
    <property type="evidence" value="ECO:0007669"/>
    <property type="project" value="UniProtKB-SubCell"/>
</dbReference>
<accession>Q08240</accession>
<keyword id="KW-0472">Membrane</keyword>
<keyword id="KW-0812">Transmembrane</keyword>
<keyword id="KW-1133">Transmembrane helix</keyword>
<reference key="1">
    <citation type="journal article" date="1997" name="Nature">
        <title>The nucleotide sequence of Saccharomyces cerevisiae chromosome XV.</title>
        <authorList>
            <person name="Dujon B."/>
            <person name="Albermann K."/>
            <person name="Aldea M."/>
            <person name="Alexandraki D."/>
            <person name="Ansorge W."/>
            <person name="Arino J."/>
            <person name="Benes V."/>
            <person name="Bohn C."/>
            <person name="Bolotin-Fukuhara M."/>
            <person name="Bordonne R."/>
            <person name="Boyer J."/>
            <person name="Camasses A."/>
            <person name="Casamayor A."/>
            <person name="Casas C."/>
            <person name="Cheret G."/>
            <person name="Cziepluch C."/>
            <person name="Daignan-Fornier B."/>
            <person name="Dang V.-D."/>
            <person name="de Haan M."/>
            <person name="Delius H."/>
            <person name="Durand P."/>
            <person name="Fairhead C."/>
            <person name="Feldmann H."/>
            <person name="Gaillon L."/>
            <person name="Galisson F."/>
            <person name="Gamo F.-J."/>
            <person name="Gancedo C."/>
            <person name="Goffeau A."/>
            <person name="Goulding S.E."/>
            <person name="Grivell L.A."/>
            <person name="Habbig B."/>
            <person name="Hand N.J."/>
            <person name="Hani J."/>
            <person name="Hattenhorst U."/>
            <person name="Hebling U."/>
            <person name="Hernando Y."/>
            <person name="Herrero E."/>
            <person name="Heumann K."/>
            <person name="Hiesel R."/>
            <person name="Hilger F."/>
            <person name="Hofmann B."/>
            <person name="Hollenberg C.P."/>
            <person name="Hughes B."/>
            <person name="Jauniaux J.-C."/>
            <person name="Kalogeropoulos A."/>
            <person name="Katsoulou C."/>
            <person name="Kordes E."/>
            <person name="Lafuente M.J."/>
            <person name="Landt O."/>
            <person name="Louis E.J."/>
            <person name="Maarse A.C."/>
            <person name="Madania A."/>
            <person name="Mannhaupt G."/>
            <person name="Marck C."/>
            <person name="Martin R.P."/>
            <person name="Mewes H.-W."/>
            <person name="Michaux G."/>
            <person name="Paces V."/>
            <person name="Parle-McDermott A.G."/>
            <person name="Pearson B.M."/>
            <person name="Perrin A."/>
            <person name="Pettersson B."/>
            <person name="Poch O."/>
            <person name="Pohl T.M."/>
            <person name="Poirey R."/>
            <person name="Portetelle D."/>
            <person name="Pujol A."/>
            <person name="Purnelle B."/>
            <person name="Ramezani Rad M."/>
            <person name="Rechmann S."/>
            <person name="Schwager C."/>
            <person name="Schweizer M."/>
            <person name="Sor F."/>
            <person name="Sterky F."/>
            <person name="Tarassov I.A."/>
            <person name="Teodoru C."/>
            <person name="Tettelin H."/>
            <person name="Thierry A."/>
            <person name="Tobiasch E."/>
            <person name="Tzermia M."/>
            <person name="Uhlen M."/>
            <person name="Unseld M."/>
            <person name="Valens M."/>
            <person name="Vandenbol M."/>
            <person name="Vetter I."/>
            <person name="Vlcek C."/>
            <person name="Voet M."/>
            <person name="Volckaert G."/>
            <person name="Voss H."/>
            <person name="Wambutt R."/>
            <person name="Wedler H."/>
            <person name="Wiemann S."/>
            <person name="Winsor B."/>
            <person name="Wolfe K.H."/>
            <person name="Zollner A."/>
            <person name="Zumstein E."/>
            <person name="Kleine K."/>
        </authorList>
    </citation>
    <scope>NUCLEOTIDE SEQUENCE [LARGE SCALE GENOMIC DNA]</scope>
    <source>
        <strain>ATCC 204508 / S288c</strain>
    </source>
</reference>
<reference key="2">
    <citation type="journal article" date="2014" name="G3 (Bethesda)">
        <title>The reference genome sequence of Saccharomyces cerevisiae: Then and now.</title>
        <authorList>
            <person name="Engel S.R."/>
            <person name="Dietrich F.S."/>
            <person name="Fisk D.G."/>
            <person name="Binkley G."/>
            <person name="Balakrishnan R."/>
            <person name="Costanzo M.C."/>
            <person name="Dwight S.S."/>
            <person name="Hitz B.C."/>
            <person name="Karra K."/>
            <person name="Nash R.S."/>
            <person name="Weng S."/>
            <person name="Wong E.D."/>
            <person name="Lloyd P."/>
            <person name="Skrzypek M.S."/>
            <person name="Miyasato S.R."/>
            <person name="Simison M."/>
            <person name="Cherry J.M."/>
        </authorList>
    </citation>
    <scope>GENOME REANNOTATION</scope>
    <source>
        <strain>ATCC 204508 / S288c</strain>
    </source>
</reference>
<reference key="3">
    <citation type="journal article" date="2006" name="Proc. Natl. Acad. Sci. U.S.A.">
        <title>A global topology map of the Saccharomyces cerevisiae membrane proteome.</title>
        <authorList>
            <person name="Kim H."/>
            <person name="Melen K."/>
            <person name="Oesterberg M."/>
            <person name="von Heijne G."/>
        </authorList>
    </citation>
    <scope>TOPOLOGY [LARGE SCALE ANALYSIS]</scope>
    <source>
        <strain>ATCC 208353 / W303-1A</strain>
    </source>
</reference>